<proteinExistence type="evidence at transcript level"/>
<keyword id="KW-0249">Electron transport</keyword>
<keyword id="KW-0274">FAD</keyword>
<keyword id="KW-0285">Flavoprotein</keyword>
<keyword id="KW-0472">Membrane</keyword>
<keyword id="KW-0496">Mitochondrion</keyword>
<keyword id="KW-0999">Mitochondrion inner membrane</keyword>
<keyword id="KW-0560">Oxidoreductase</keyword>
<keyword id="KW-1185">Reference proteome</keyword>
<keyword id="KW-0809">Transit peptide</keyword>
<keyword id="KW-0813">Transport</keyword>
<keyword id="KW-0816">Tricarboxylic acid cycle</keyword>
<sequence length="665" mass="72854">MALLKVAPSRLLSRALQLASRVQNCTPTVTTARRNFHFTVYGRKDTSAKVSDSISTQYPVVDHEFDAVVVGAGGAGLRAAFGLSEAGFNTACITKLFPTRSHTVAAQGGINAALGNMEDDDWRWHFYDTVKGSDWLGDQDAIHYMTEQAPASVIELENYGMPFSRTEQGKIYQRAFGGQSLKYGKGGQAHRCCCVADRTGHSLLHTLYGRSLRYDTSYFVEYFALDLLMENGECRGVIALCMEDGSIHRFRAKNTVIATGGYGRTFFSCTSAHTSTGDGTAMVTRAGLPCQDLEFVQFHPTGIYGAGCLITEGCRGEGGILINSEGERFMERYAPVAKDLASRDVVSRSMTIEIREGRGCGKDKDHVYLQLHHLPPSQLASRLPGISETAMIFAGVDVTKEPIPVLPTVHYNMGGIPTNYKGQVITHVNGEDRVVPGLYSCGEAASASVHGANRLGANSLLDLVVFGRACALSIAESCKPGEAVPSIKENAGEESVANLDKLRYANGSTRTSEIRINMQKTMQNHAAVFRTGSVLKEGCEKLSVINSSMDDIKTFDRGIVWNTDLVETLELQNLMLCALQTINGAEARKESRGAHAREDYKVRIDEYDFSKPLQGQQKKSFNEHWRKHTLSYVDKKGKVSLEYRPVIDTTLNEDCASVPPAIRSY</sequence>
<gene>
    <name type="primary">sdha-a</name>
</gene>
<protein>
    <recommendedName>
        <fullName>Succinate dehydrogenase [ubiquinone] flavoprotein subunit A, mitochondrial</fullName>
        <ecNumber evidence="2">1.3.5.1</ecNumber>
    </recommendedName>
    <alternativeName>
        <fullName>Flavoprotein subunit of complex II A</fullName>
        <shortName>Fp</shortName>
    </alternativeName>
    <alternativeName>
        <fullName>Malate dehydrogenase [quinone] flavoprotein subunit</fullName>
        <ecNumber evidence="1">1.1.5.-</ecNumber>
    </alternativeName>
</protein>
<reference key="1">
    <citation type="submission" date="2003-10" db="EMBL/GenBank/DDBJ databases">
        <authorList>
            <consortium name="NIH - Xenopus Gene Collection (XGC) project"/>
        </authorList>
    </citation>
    <scope>NUCLEOTIDE SEQUENCE [LARGE SCALE MRNA]</scope>
    <source>
        <tissue>Kidney</tissue>
    </source>
</reference>
<comment type="function">
    <text evidence="1 2">Flavoprotein (FP) subunit of succinate dehydrogenase (SDH) that is involved in complex II of the mitochondrial electron transport chain and is responsible for transferring electrons from succinate to ubiquinone (coenzyme Q) (By similarity). SDH also oxidizes malate to the non-canonical enol form of oxaloacetate, enol-oxaloacetate. Enol-oxaloacetate, which is a potent inhibitor of the succinate dehydrogenase activity, is further isomerized into keto-oxaloacetate (By similarity).</text>
</comment>
<comment type="catalytic activity">
    <reaction evidence="2">
        <text>a ubiquinone + succinate = a ubiquinol + fumarate</text>
        <dbReference type="Rhea" id="RHEA:13713"/>
        <dbReference type="Rhea" id="RHEA-COMP:9565"/>
        <dbReference type="Rhea" id="RHEA-COMP:9566"/>
        <dbReference type="ChEBI" id="CHEBI:16389"/>
        <dbReference type="ChEBI" id="CHEBI:17976"/>
        <dbReference type="ChEBI" id="CHEBI:29806"/>
        <dbReference type="ChEBI" id="CHEBI:30031"/>
        <dbReference type="EC" id="1.3.5.1"/>
    </reaction>
</comment>
<comment type="catalytic activity">
    <reaction evidence="1">
        <text>(R)-malate + a quinone = enol-oxaloacetate + a quinol</text>
        <dbReference type="Rhea" id="RHEA:79827"/>
        <dbReference type="ChEBI" id="CHEBI:15588"/>
        <dbReference type="ChEBI" id="CHEBI:17479"/>
        <dbReference type="ChEBI" id="CHEBI:24646"/>
        <dbReference type="ChEBI" id="CHEBI:132124"/>
    </reaction>
    <physiologicalReaction direction="left-to-right" evidence="1">
        <dbReference type="Rhea" id="RHEA:79828"/>
    </physiologicalReaction>
</comment>
<comment type="catalytic activity">
    <reaction evidence="1">
        <text>(S)-malate + a quinone = enol-oxaloacetate + a quinol</text>
        <dbReference type="Rhea" id="RHEA:79831"/>
        <dbReference type="ChEBI" id="CHEBI:15589"/>
        <dbReference type="ChEBI" id="CHEBI:17479"/>
        <dbReference type="ChEBI" id="CHEBI:24646"/>
        <dbReference type="ChEBI" id="CHEBI:132124"/>
    </reaction>
    <physiologicalReaction direction="left-to-right" evidence="1">
        <dbReference type="Rhea" id="RHEA:79832"/>
    </physiologicalReaction>
</comment>
<comment type="cofactor">
    <cofactor evidence="3">
        <name>FAD</name>
        <dbReference type="ChEBI" id="CHEBI:57692"/>
    </cofactor>
</comment>
<comment type="activity regulation">
    <text evidence="1">Enol-oxaloacetate inhibits the succinate dehydrogenase activity.</text>
</comment>
<comment type="pathway">
    <text evidence="2">Carbohydrate metabolism; tricarboxylic acid cycle; fumarate from succinate (eukaryal route): step 1/1.</text>
</comment>
<comment type="subunit">
    <text evidence="3">Component of complex II composed of four subunits: a flavoprotein (FP), an iron-sulfur protein (IP), and a cytochrome b composed of a large and a small subunit.</text>
</comment>
<comment type="subcellular location">
    <subcellularLocation>
        <location evidence="3">Mitochondrion inner membrane</location>
        <topology evidence="3">Peripheral membrane protein</topology>
        <orientation evidence="3">Matrix side</orientation>
    </subcellularLocation>
</comment>
<comment type="similarity">
    <text evidence="5">Belongs to the FAD-dependent oxidoreductase 2 family. FRD/SDH subfamily.</text>
</comment>
<organism>
    <name type="scientific">Xenopus laevis</name>
    <name type="common">African clawed frog</name>
    <dbReference type="NCBI Taxonomy" id="8355"/>
    <lineage>
        <taxon>Eukaryota</taxon>
        <taxon>Metazoa</taxon>
        <taxon>Chordata</taxon>
        <taxon>Craniata</taxon>
        <taxon>Vertebrata</taxon>
        <taxon>Euteleostomi</taxon>
        <taxon>Amphibia</taxon>
        <taxon>Batrachia</taxon>
        <taxon>Anura</taxon>
        <taxon>Pipoidea</taxon>
        <taxon>Pipidae</taxon>
        <taxon>Xenopodinae</taxon>
        <taxon>Xenopus</taxon>
        <taxon>Xenopus</taxon>
    </lineage>
</organism>
<name>SDHAA_XENLA</name>
<dbReference type="EC" id="1.3.5.1" evidence="2"/>
<dbReference type="EC" id="1.1.5.-" evidence="1"/>
<dbReference type="EMBL" id="BC060446">
    <property type="protein sequence ID" value="AAH60446.1"/>
    <property type="molecule type" value="mRNA"/>
</dbReference>
<dbReference type="RefSeq" id="NP_001083473.1">
    <property type="nucleotide sequence ID" value="NM_001090004.1"/>
</dbReference>
<dbReference type="SMR" id="Q6PA58"/>
<dbReference type="DNASU" id="398946"/>
<dbReference type="GeneID" id="398946"/>
<dbReference type="KEGG" id="xla:398946"/>
<dbReference type="AGR" id="Xenbase:XB-GENE-17344569"/>
<dbReference type="CTD" id="398946"/>
<dbReference type="Xenbase" id="XB-GENE-17344569">
    <property type="gene designation" value="sdha.L"/>
</dbReference>
<dbReference type="OrthoDB" id="71672at2759"/>
<dbReference type="UniPathway" id="UPA00223">
    <property type="reaction ID" value="UER01006"/>
</dbReference>
<dbReference type="Proteomes" id="UP000186698">
    <property type="component" value="Chromosome 6L"/>
</dbReference>
<dbReference type="Bgee" id="398946">
    <property type="expression patterns" value="Expressed in heart and 20 other cell types or tissues"/>
</dbReference>
<dbReference type="GO" id="GO:0005743">
    <property type="term" value="C:mitochondrial inner membrane"/>
    <property type="evidence" value="ECO:0000250"/>
    <property type="project" value="UniProtKB"/>
</dbReference>
<dbReference type="GO" id="GO:0045273">
    <property type="term" value="C:respiratory chain complex II (succinate dehydrogenase)"/>
    <property type="evidence" value="ECO:0000318"/>
    <property type="project" value="GO_Central"/>
</dbReference>
<dbReference type="GO" id="GO:0009055">
    <property type="term" value="F:electron transfer activity"/>
    <property type="evidence" value="ECO:0000318"/>
    <property type="project" value="GO_Central"/>
</dbReference>
<dbReference type="GO" id="GO:0050660">
    <property type="term" value="F:flavin adenine dinucleotide binding"/>
    <property type="evidence" value="ECO:0000318"/>
    <property type="project" value="GO_Central"/>
</dbReference>
<dbReference type="GO" id="GO:0008177">
    <property type="term" value="F:succinate dehydrogenase (quinone) activity"/>
    <property type="evidence" value="ECO:0000250"/>
    <property type="project" value="UniProtKB"/>
</dbReference>
<dbReference type="GO" id="GO:0006121">
    <property type="term" value="P:mitochondrial electron transport, succinate to ubiquinone"/>
    <property type="evidence" value="ECO:0000318"/>
    <property type="project" value="GO_Central"/>
</dbReference>
<dbReference type="GO" id="GO:0006099">
    <property type="term" value="P:tricarboxylic acid cycle"/>
    <property type="evidence" value="ECO:0007669"/>
    <property type="project" value="UniProtKB-UniPathway"/>
</dbReference>
<dbReference type="FunFam" id="3.90.700.10:FF:000001">
    <property type="entry name" value="Mitochondrial succinate dehydrogenase flavoprotein subunit"/>
    <property type="match status" value="1"/>
</dbReference>
<dbReference type="FunFam" id="4.10.80.40:FF:000004">
    <property type="entry name" value="Succinate dehydrogenase [ubiquinone] flavoprotein subunit, mitochondrial"/>
    <property type="match status" value="1"/>
</dbReference>
<dbReference type="FunFam" id="3.50.50.60:FF:000482">
    <property type="entry name" value="Succinate dehydrogenase complex, subunit A, flavoprotein (Fp)"/>
    <property type="match status" value="1"/>
</dbReference>
<dbReference type="FunFam" id="3.50.50.60:FF:001062">
    <property type="entry name" value="Succinate dehydrogenase complex, subunit A, flavoprotein (Fp)"/>
    <property type="match status" value="1"/>
</dbReference>
<dbReference type="FunFam" id="1.20.58.100:FF:000001">
    <property type="entry name" value="Succinate dehydrogenase flavoprotein subunit (SdhA)"/>
    <property type="match status" value="1"/>
</dbReference>
<dbReference type="Gene3D" id="3.50.50.60">
    <property type="entry name" value="FAD/NAD(P)-binding domain"/>
    <property type="match status" value="1"/>
</dbReference>
<dbReference type="Gene3D" id="1.20.58.100">
    <property type="entry name" value="Fumarate reductase/succinate dehydrogenase flavoprotein-like, C-terminal domain"/>
    <property type="match status" value="1"/>
</dbReference>
<dbReference type="Gene3D" id="4.10.80.40">
    <property type="entry name" value="succinate dehydrogenase protein domain"/>
    <property type="match status" value="1"/>
</dbReference>
<dbReference type="Gene3D" id="3.90.700.10">
    <property type="entry name" value="Succinate dehydrogenase/fumarate reductase flavoprotein, catalytic domain"/>
    <property type="match status" value="1"/>
</dbReference>
<dbReference type="InterPro" id="IPR003953">
    <property type="entry name" value="FAD-dep_OxRdtase_2_FAD-bd"/>
</dbReference>
<dbReference type="InterPro" id="IPR036188">
    <property type="entry name" value="FAD/NAD-bd_sf"/>
</dbReference>
<dbReference type="InterPro" id="IPR003952">
    <property type="entry name" value="FRD_SDH_FAD_BS"/>
</dbReference>
<dbReference type="InterPro" id="IPR037099">
    <property type="entry name" value="Fum_R/Succ_DH_flav-like_C_sf"/>
</dbReference>
<dbReference type="InterPro" id="IPR015939">
    <property type="entry name" value="Fum_Rdtase/Succ_DH_flav-like_C"/>
</dbReference>
<dbReference type="InterPro" id="IPR030664">
    <property type="entry name" value="SdhA/FrdA/AprA"/>
</dbReference>
<dbReference type="InterPro" id="IPR027477">
    <property type="entry name" value="Succ_DH/fumarate_Rdtase_cat_sf"/>
</dbReference>
<dbReference type="InterPro" id="IPR011281">
    <property type="entry name" value="Succ_DH_flav_su_fwd"/>
</dbReference>
<dbReference type="InterPro" id="IPR014006">
    <property type="entry name" value="Succ_Dhase_FrdA_Gneg"/>
</dbReference>
<dbReference type="NCBIfam" id="TIGR01816">
    <property type="entry name" value="sdhA_forward"/>
    <property type="match status" value="1"/>
</dbReference>
<dbReference type="NCBIfam" id="TIGR01812">
    <property type="entry name" value="sdhA_frdA_Gneg"/>
    <property type="match status" value="1"/>
</dbReference>
<dbReference type="PANTHER" id="PTHR11632">
    <property type="entry name" value="SUCCINATE DEHYDROGENASE 2 FLAVOPROTEIN SUBUNIT"/>
    <property type="match status" value="1"/>
</dbReference>
<dbReference type="PANTHER" id="PTHR11632:SF51">
    <property type="entry name" value="SUCCINATE DEHYDROGENASE [UBIQUINONE] FLAVOPROTEIN SUBUNIT, MITOCHONDRIAL"/>
    <property type="match status" value="1"/>
</dbReference>
<dbReference type="Pfam" id="PF00890">
    <property type="entry name" value="FAD_binding_2"/>
    <property type="match status" value="1"/>
</dbReference>
<dbReference type="Pfam" id="PF02910">
    <property type="entry name" value="Succ_DH_flav_C"/>
    <property type="match status" value="1"/>
</dbReference>
<dbReference type="PIRSF" id="PIRSF000171">
    <property type="entry name" value="SDHA_APRA_LASPO"/>
    <property type="match status" value="1"/>
</dbReference>
<dbReference type="SUPFAM" id="SSF51905">
    <property type="entry name" value="FAD/NAD(P)-binding domain"/>
    <property type="match status" value="1"/>
</dbReference>
<dbReference type="SUPFAM" id="SSF46977">
    <property type="entry name" value="Succinate dehydrogenase/fumarate reductase flavoprotein C-terminal domain"/>
    <property type="match status" value="1"/>
</dbReference>
<dbReference type="SUPFAM" id="SSF56425">
    <property type="entry name" value="Succinate dehydrogenase/fumarate reductase flavoprotein, catalytic domain"/>
    <property type="match status" value="1"/>
</dbReference>
<dbReference type="PROSITE" id="PS00504">
    <property type="entry name" value="FRD_SDH_FAD_BINDING"/>
    <property type="match status" value="1"/>
</dbReference>
<feature type="transit peptide" description="Mitochondrion" evidence="3">
    <location>
        <begin position="1"/>
        <end position="45"/>
    </location>
</feature>
<feature type="chain" id="PRO_0000272305" description="Succinate dehydrogenase [ubiquinone] flavoprotein subunit A, mitochondrial">
    <location>
        <begin position="46"/>
        <end position="665"/>
    </location>
</feature>
<feature type="active site" description="Proton acceptor" evidence="4">
    <location>
        <position position="343"/>
    </location>
</feature>
<feature type="binding site" evidence="2">
    <location>
        <position position="72"/>
    </location>
    <ligand>
        <name>FAD</name>
        <dbReference type="ChEBI" id="CHEBI:57692"/>
    </ligand>
</feature>
<feature type="binding site" evidence="2">
    <location>
        <position position="75"/>
    </location>
    <ligand>
        <name>FAD</name>
        <dbReference type="ChEBI" id="CHEBI:57692"/>
    </ligand>
</feature>
<feature type="binding site" evidence="2">
    <location>
        <position position="94"/>
    </location>
    <ligand>
        <name>FAD</name>
        <dbReference type="ChEBI" id="CHEBI:57692"/>
    </ligand>
</feature>
<feature type="binding site" evidence="2">
    <location>
        <position position="95"/>
    </location>
    <ligand>
        <name>FAD</name>
        <dbReference type="ChEBI" id="CHEBI:57692"/>
    </ligand>
</feature>
<feature type="binding site" evidence="2">
    <location>
        <position position="101"/>
    </location>
    <ligand>
        <name>FAD</name>
        <dbReference type="ChEBI" id="CHEBI:57692"/>
    </ligand>
</feature>
<feature type="binding site" evidence="2">
    <location>
        <position position="103"/>
    </location>
    <ligand>
        <name>FAD</name>
        <dbReference type="ChEBI" id="CHEBI:57692"/>
    </ligand>
</feature>
<feature type="binding site" evidence="2">
    <location>
        <position position="108"/>
    </location>
    <ligand>
        <name>FAD</name>
        <dbReference type="ChEBI" id="CHEBI:57692"/>
    </ligand>
</feature>
<feature type="binding site" evidence="2">
    <location>
        <position position="224"/>
    </location>
    <ligand>
        <name>FAD</name>
        <dbReference type="ChEBI" id="CHEBI:57692"/>
    </ligand>
</feature>
<feature type="binding site" evidence="2">
    <location>
        <position position="278"/>
    </location>
    <ligand>
        <name>FAD</name>
        <dbReference type="ChEBI" id="CHEBI:57692"/>
    </ligand>
</feature>
<feature type="binding site" evidence="2">
    <location>
        <position position="299"/>
    </location>
    <ligand>
        <name>oxaloacetate</name>
        <dbReference type="ChEBI" id="CHEBI:16452"/>
    </ligand>
</feature>
<feature type="binding site" evidence="2">
    <location>
        <position position="343"/>
    </location>
    <ligand>
        <name>oxaloacetate</name>
        <dbReference type="ChEBI" id="CHEBI:16452"/>
    </ligand>
</feature>
<feature type="binding site" evidence="2">
    <location>
        <position position="410"/>
    </location>
    <ligand>
        <name>oxaloacetate</name>
        <dbReference type="ChEBI" id="CHEBI:16452"/>
    </ligand>
</feature>
<feature type="binding site" evidence="2">
    <location>
        <position position="443"/>
    </location>
    <ligand>
        <name>FAD</name>
        <dbReference type="ChEBI" id="CHEBI:57692"/>
    </ligand>
</feature>
<feature type="binding site" evidence="2">
    <location>
        <position position="454"/>
    </location>
    <ligand>
        <name>oxaloacetate</name>
        <dbReference type="ChEBI" id="CHEBI:16452"/>
    </ligand>
</feature>
<feature type="binding site" evidence="2">
    <location>
        <position position="457"/>
    </location>
    <ligand>
        <name>oxaloacetate</name>
        <dbReference type="ChEBI" id="CHEBI:16452"/>
    </ligand>
</feature>
<feature type="binding site" evidence="2">
    <location>
        <position position="459"/>
    </location>
    <ligand>
        <name>FAD</name>
        <dbReference type="ChEBI" id="CHEBI:57692"/>
    </ligand>
</feature>
<feature type="binding site" evidence="2">
    <location>
        <position position="460"/>
    </location>
    <ligand>
        <name>FAD</name>
        <dbReference type="ChEBI" id="CHEBI:57692"/>
    </ligand>
</feature>
<feature type="modified residue" description="Tele-8alpha-FAD histidine" evidence="4">
    <location>
        <position position="102"/>
    </location>
</feature>
<accession>Q6PA58</accession>
<evidence type="ECO:0000250" key="1">
    <source>
        <dbReference type="UniProtKB" id="P31039"/>
    </source>
</evidence>
<evidence type="ECO:0000250" key="2">
    <source>
        <dbReference type="UniProtKB" id="P31040"/>
    </source>
</evidence>
<evidence type="ECO:0000250" key="3">
    <source>
        <dbReference type="UniProtKB" id="Q0QF01"/>
    </source>
</evidence>
<evidence type="ECO:0000250" key="4">
    <source>
        <dbReference type="UniProtKB" id="Q9YHT1"/>
    </source>
</evidence>
<evidence type="ECO:0000305" key="5"/>